<sequence length="792" mass="87733">MRIPITLLQTYFSEPLSTKEILEACDHIGIEAEIENTTLYSFASVITAKILHTIPHPNADKLRVATLTDGEKEHQVVCGAPNCEAGLIVALALPGAKLFDSEGQAYTIKKSKLRGVESQGMCCGADELGLDELQIQERALLELPEATPLGEDLATVLGNTSLEISLTPNLGHCASFLGLAREICHVTQANLVIPKEFSFENLPTTALDMGNDPDICPFFSYVVITGISAQPSPIKLQESLQALKQKPINAIVDITNYIMLSLGQPLHAYDASHVALDSLRVEKLSTPESLTLLNGETVLLPSGVPVVRDDHSLLGLGGVMGAKAPSFQETTTTTVIKAAYFLPEALRASQKLLPIPSESAYRFTRGIDPQNVVPALQAAIHYILEIFPEATISPIYSSGEICRELKEVALRPKTLQRILGKSFSIEILSQKLQSLGFSTTPQETSLLVKVPSYRHDINEEIDLVEEICRTESWNIETQNPVSCYTPIYKLKRETAGFLANAGLQEFFTPDLLDPETVALTRKEKEEISLQGSKHTTVLRSSLLPGLLKSAATNLNRQAPSVQAFEIGTVYAKHGEQCQETQTLAILLTEDGESRSWLPKPSLSFYSLKGWVERLLYHHHLSIDALTLESSALCEFHPYQQGVLRIHKQSFATLGQVHPELAKKAQIKHPVFFAELNLDLLCKMLKKTTKLYKPYAIYPSSFRDLTLTVPEDIPANLLRQKLLHEGSKWLESVTIISIYQDKSLETRNKNVSLRLVFQDYERTLSNQDIEEEYCRLVALLNELLTDTKGTINS</sequence>
<proteinExistence type="inferred from homology"/>
<evidence type="ECO:0000250" key="1"/>
<evidence type="ECO:0000305" key="2"/>
<organism>
    <name type="scientific">Chlamydia pneumoniae</name>
    <name type="common">Chlamydophila pneumoniae</name>
    <dbReference type="NCBI Taxonomy" id="83558"/>
    <lineage>
        <taxon>Bacteria</taxon>
        <taxon>Pseudomonadati</taxon>
        <taxon>Chlamydiota</taxon>
        <taxon>Chlamydiia</taxon>
        <taxon>Chlamydiales</taxon>
        <taxon>Chlamydiaceae</taxon>
        <taxon>Chlamydia/Chlamydophila group</taxon>
        <taxon>Chlamydia</taxon>
    </lineage>
</organism>
<dbReference type="EC" id="6.1.1.20"/>
<dbReference type="EMBL" id="AE001363">
    <property type="protein sequence ID" value="AAD18733.1"/>
    <property type="molecule type" value="Genomic_DNA"/>
</dbReference>
<dbReference type="EMBL" id="AE002161">
    <property type="protein sequence ID" value="AAF38035.1"/>
    <property type="molecule type" value="Genomic_DNA"/>
</dbReference>
<dbReference type="EMBL" id="BA000008">
    <property type="protein sequence ID" value="BAA98801.1"/>
    <property type="molecule type" value="Genomic_DNA"/>
</dbReference>
<dbReference type="EMBL" id="AE009440">
    <property type="protein sequence ID" value="AAP98547.1"/>
    <property type="molecule type" value="Genomic_DNA"/>
</dbReference>
<dbReference type="PIR" id="D81608">
    <property type="entry name" value="D81608"/>
</dbReference>
<dbReference type="PIR" id="G86564">
    <property type="entry name" value="G86564"/>
</dbReference>
<dbReference type="PIR" id="H72058">
    <property type="entry name" value="H72058"/>
</dbReference>
<dbReference type="RefSeq" id="NP_224790.1">
    <property type="nucleotide sequence ID" value="NC_000922.1"/>
</dbReference>
<dbReference type="RefSeq" id="WP_010883232.1">
    <property type="nucleotide sequence ID" value="NZ_LN847257.1"/>
</dbReference>
<dbReference type="RefSeq" id="WP_010891975.1">
    <property type="nucleotide sequence ID" value="NZ_LN846995.1"/>
</dbReference>
<dbReference type="SMR" id="Q9Z7W0"/>
<dbReference type="STRING" id="406984.CPK_ORF01110"/>
<dbReference type="GeneID" id="45050641"/>
<dbReference type="KEGG" id="cpa:CP_0154"/>
<dbReference type="KEGG" id="cpj:pheT"/>
<dbReference type="KEGG" id="cpn:CPn_0594"/>
<dbReference type="KEGG" id="cpt:CpB0618"/>
<dbReference type="PATRIC" id="fig|115713.3.peg.662"/>
<dbReference type="eggNOG" id="COG0072">
    <property type="taxonomic scope" value="Bacteria"/>
</dbReference>
<dbReference type="eggNOG" id="COG0073">
    <property type="taxonomic scope" value="Bacteria"/>
</dbReference>
<dbReference type="HOGENOM" id="CLU_016891_0_0_0"/>
<dbReference type="OrthoDB" id="9805455at2"/>
<dbReference type="Proteomes" id="UP000000583">
    <property type="component" value="Chromosome"/>
</dbReference>
<dbReference type="Proteomes" id="UP000000801">
    <property type="component" value="Chromosome"/>
</dbReference>
<dbReference type="GO" id="GO:0009328">
    <property type="term" value="C:phenylalanine-tRNA ligase complex"/>
    <property type="evidence" value="ECO:0007669"/>
    <property type="project" value="TreeGrafter"/>
</dbReference>
<dbReference type="GO" id="GO:0005524">
    <property type="term" value="F:ATP binding"/>
    <property type="evidence" value="ECO:0007669"/>
    <property type="project" value="UniProtKB-UniRule"/>
</dbReference>
<dbReference type="GO" id="GO:0000287">
    <property type="term" value="F:magnesium ion binding"/>
    <property type="evidence" value="ECO:0007669"/>
    <property type="project" value="UniProtKB-UniRule"/>
</dbReference>
<dbReference type="GO" id="GO:0004826">
    <property type="term" value="F:phenylalanine-tRNA ligase activity"/>
    <property type="evidence" value="ECO:0007669"/>
    <property type="project" value="UniProtKB-UniRule"/>
</dbReference>
<dbReference type="GO" id="GO:0000049">
    <property type="term" value="F:tRNA binding"/>
    <property type="evidence" value="ECO:0007669"/>
    <property type="project" value="UniProtKB-KW"/>
</dbReference>
<dbReference type="GO" id="GO:0006432">
    <property type="term" value="P:phenylalanyl-tRNA aminoacylation"/>
    <property type="evidence" value="ECO:0007669"/>
    <property type="project" value="UniProtKB-UniRule"/>
</dbReference>
<dbReference type="CDD" id="cd00769">
    <property type="entry name" value="PheRS_beta_core"/>
    <property type="match status" value="1"/>
</dbReference>
<dbReference type="CDD" id="cd02796">
    <property type="entry name" value="tRNA_bind_bactPheRS"/>
    <property type="match status" value="1"/>
</dbReference>
<dbReference type="Gene3D" id="3.30.56.10">
    <property type="match status" value="2"/>
</dbReference>
<dbReference type="Gene3D" id="3.30.930.10">
    <property type="entry name" value="Bira Bifunctional Protein, Domain 2"/>
    <property type="match status" value="1"/>
</dbReference>
<dbReference type="Gene3D" id="3.30.70.380">
    <property type="entry name" value="Ferrodoxin-fold anticodon-binding domain"/>
    <property type="match status" value="1"/>
</dbReference>
<dbReference type="Gene3D" id="2.40.50.140">
    <property type="entry name" value="Nucleic acid-binding proteins"/>
    <property type="match status" value="1"/>
</dbReference>
<dbReference type="Gene3D" id="3.50.40.10">
    <property type="entry name" value="Phenylalanyl-trna Synthetase, Chain B, domain 3"/>
    <property type="match status" value="1"/>
</dbReference>
<dbReference type="HAMAP" id="MF_00283">
    <property type="entry name" value="Phe_tRNA_synth_beta1"/>
    <property type="match status" value="1"/>
</dbReference>
<dbReference type="InterPro" id="IPR045864">
    <property type="entry name" value="aa-tRNA-synth_II/BPL/LPL"/>
</dbReference>
<dbReference type="InterPro" id="IPR005146">
    <property type="entry name" value="B3/B4_tRNA-bd"/>
</dbReference>
<dbReference type="InterPro" id="IPR009061">
    <property type="entry name" value="DNA-bd_dom_put_sf"/>
</dbReference>
<dbReference type="InterPro" id="IPR005121">
    <property type="entry name" value="Fdx_antiC-bd"/>
</dbReference>
<dbReference type="InterPro" id="IPR036690">
    <property type="entry name" value="Fdx_antiC-bd_sf"/>
</dbReference>
<dbReference type="InterPro" id="IPR012340">
    <property type="entry name" value="NA-bd_OB-fold"/>
</dbReference>
<dbReference type="InterPro" id="IPR045060">
    <property type="entry name" value="Phe-tRNA-ligase_IIc_bsu"/>
</dbReference>
<dbReference type="InterPro" id="IPR004532">
    <property type="entry name" value="Phe-tRNA-ligase_IIc_bsu_bact"/>
</dbReference>
<dbReference type="InterPro" id="IPR020825">
    <property type="entry name" value="Phe-tRNA_synthase-like_B3/B4"/>
</dbReference>
<dbReference type="InterPro" id="IPR041616">
    <property type="entry name" value="PheRS_beta_core"/>
</dbReference>
<dbReference type="InterPro" id="IPR002547">
    <property type="entry name" value="tRNA-bd_dom"/>
</dbReference>
<dbReference type="InterPro" id="IPR033714">
    <property type="entry name" value="tRNA_bind_bactPheRS"/>
</dbReference>
<dbReference type="InterPro" id="IPR005147">
    <property type="entry name" value="tRNA_synthase_B5-dom"/>
</dbReference>
<dbReference type="NCBIfam" id="TIGR00472">
    <property type="entry name" value="pheT_bact"/>
    <property type="match status" value="1"/>
</dbReference>
<dbReference type="PANTHER" id="PTHR10947:SF0">
    <property type="entry name" value="PHENYLALANINE--TRNA LIGASE BETA SUBUNIT"/>
    <property type="match status" value="1"/>
</dbReference>
<dbReference type="PANTHER" id="PTHR10947">
    <property type="entry name" value="PHENYLALANYL-TRNA SYNTHETASE BETA CHAIN AND LEUCINE-RICH REPEAT-CONTAINING PROTEIN 47"/>
    <property type="match status" value="1"/>
</dbReference>
<dbReference type="Pfam" id="PF03483">
    <property type="entry name" value="B3_4"/>
    <property type="match status" value="1"/>
</dbReference>
<dbReference type="Pfam" id="PF03484">
    <property type="entry name" value="B5"/>
    <property type="match status" value="1"/>
</dbReference>
<dbReference type="Pfam" id="PF03147">
    <property type="entry name" value="FDX-ACB"/>
    <property type="match status" value="1"/>
</dbReference>
<dbReference type="Pfam" id="PF01588">
    <property type="entry name" value="tRNA_bind"/>
    <property type="match status" value="1"/>
</dbReference>
<dbReference type="Pfam" id="PF17759">
    <property type="entry name" value="tRNA_synthFbeta"/>
    <property type="match status" value="1"/>
</dbReference>
<dbReference type="SMART" id="SM00873">
    <property type="entry name" value="B3_4"/>
    <property type="match status" value="1"/>
</dbReference>
<dbReference type="SMART" id="SM00874">
    <property type="entry name" value="B5"/>
    <property type="match status" value="1"/>
</dbReference>
<dbReference type="SMART" id="SM00896">
    <property type="entry name" value="FDX-ACB"/>
    <property type="match status" value="1"/>
</dbReference>
<dbReference type="SUPFAM" id="SSF54991">
    <property type="entry name" value="Anticodon-binding domain of PheRS"/>
    <property type="match status" value="1"/>
</dbReference>
<dbReference type="SUPFAM" id="SSF55681">
    <property type="entry name" value="Class II aaRS and biotin synthetases"/>
    <property type="match status" value="1"/>
</dbReference>
<dbReference type="SUPFAM" id="SSF50249">
    <property type="entry name" value="Nucleic acid-binding proteins"/>
    <property type="match status" value="1"/>
</dbReference>
<dbReference type="SUPFAM" id="SSF56037">
    <property type="entry name" value="PheT/TilS domain"/>
    <property type="match status" value="1"/>
</dbReference>
<dbReference type="SUPFAM" id="SSF46955">
    <property type="entry name" value="Putative DNA-binding domain"/>
    <property type="match status" value="1"/>
</dbReference>
<dbReference type="PROSITE" id="PS51483">
    <property type="entry name" value="B5"/>
    <property type="match status" value="1"/>
</dbReference>
<dbReference type="PROSITE" id="PS51447">
    <property type="entry name" value="FDX_ACB"/>
    <property type="match status" value="1"/>
</dbReference>
<dbReference type="PROSITE" id="PS50886">
    <property type="entry name" value="TRBD"/>
    <property type="match status" value="1"/>
</dbReference>
<feature type="chain" id="PRO_0000126866" description="Phenylalanine--tRNA ligase beta subunit">
    <location>
        <begin position="1"/>
        <end position="792"/>
    </location>
</feature>
<feature type="domain" description="tRNA-binding">
    <location>
        <begin position="39"/>
        <end position="154"/>
    </location>
</feature>
<feature type="domain" description="B5">
    <location>
        <begin position="403"/>
        <end position="480"/>
    </location>
</feature>
<feature type="domain" description="FDX-ACB">
    <location>
        <begin position="695"/>
        <end position="791"/>
    </location>
</feature>
<feature type="binding site" evidence="1">
    <location>
        <position position="456"/>
    </location>
    <ligand>
        <name>Mg(2+)</name>
        <dbReference type="ChEBI" id="CHEBI:18420"/>
        <note>shared with alpha subunit</note>
    </ligand>
</feature>
<feature type="binding site" evidence="1">
    <location>
        <position position="462"/>
    </location>
    <ligand>
        <name>Mg(2+)</name>
        <dbReference type="ChEBI" id="CHEBI:18420"/>
        <note>shared with alpha subunit</note>
    </ligand>
</feature>
<feature type="binding site" evidence="1">
    <location>
        <position position="465"/>
    </location>
    <ligand>
        <name>Mg(2+)</name>
        <dbReference type="ChEBI" id="CHEBI:18420"/>
        <note>shared with alpha subunit</note>
    </ligand>
</feature>
<feature type="binding site" evidence="1">
    <location>
        <position position="466"/>
    </location>
    <ligand>
        <name>Mg(2+)</name>
        <dbReference type="ChEBI" id="CHEBI:18420"/>
        <note>shared with alpha subunit</note>
    </ligand>
</feature>
<feature type="sequence variant" description="In strain: CWL029 and TW-183.">
    <original>C</original>
    <variation>Y</variation>
    <location>
        <position position="577"/>
    </location>
</feature>
<feature type="sequence conflict" description="In Ref. 3; BAA98801." evidence="2" ref="3">
    <original>G</original>
    <variation>A</variation>
    <location>
        <position position="171"/>
    </location>
</feature>
<reference key="1">
    <citation type="journal article" date="1999" name="Nat. Genet.">
        <title>Comparative genomes of Chlamydia pneumoniae and C. trachomatis.</title>
        <authorList>
            <person name="Kalman S."/>
            <person name="Mitchell W.P."/>
            <person name="Marathe R."/>
            <person name="Lammel C.J."/>
            <person name="Fan J."/>
            <person name="Hyman R.W."/>
            <person name="Olinger L."/>
            <person name="Grimwood J."/>
            <person name="Davis R.W."/>
            <person name="Stephens R.S."/>
        </authorList>
    </citation>
    <scope>NUCLEOTIDE SEQUENCE [LARGE SCALE GENOMIC DNA]</scope>
    <source>
        <strain>CWL029</strain>
    </source>
</reference>
<reference key="2">
    <citation type="journal article" date="2000" name="Nucleic Acids Res.">
        <title>Genome sequences of Chlamydia trachomatis MoPn and Chlamydia pneumoniae AR39.</title>
        <authorList>
            <person name="Read T.D."/>
            <person name="Brunham R.C."/>
            <person name="Shen C."/>
            <person name="Gill S.R."/>
            <person name="Heidelberg J.F."/>
            <person name="White O."/>
            <person name="Hickey E.K."/>
            <person name="Peterson J.D."/>
            <person name="Utterback T.R."/>
            <person name="Berry K.J."/>
            <person name="Bass S."/>
            <person name="Linher K.D."/>
            <person name="Weidman J.F."/>
            <person name="Khouri H.M."/>
            <person name="Craven B."/>
            <person name="Bowman C."/>
            <person name="Dodson R.J."/>
            <person name="Gwinn M.L."/>
            <person name="Nelson W.C."/>
            <person name="DeBoy R.T."/>
            <person name="Kolonay J.F."/>
            <person name="McClarty G."/>
            <person name="Salzberg S.L."/>
            <person name="Eisen J.A."/>
            <person name="Fraser C.M."/>
        </authorList>
    </citation>
    <scope>NUCLEOTIDE SEQUENCE [LARGE SCALE GENOMIC DNA]</scope>
    <source>
        <strain>AR39</strain>
    </source>
</reference>
<reference key="3">
    <citation type="journal article" date="2000" name="Nucleic Acids Res.">
        <title>Comparison of whole genome sequences of Chlamydia pneumoniae J138 from Japan and CWL029 from USA.</title>
        <authorList>
            <person name="Shirai M."/>
            <person name="Hirakawa H."/>
            <person name="Kimoto M."/>
            <person name="Tabuchi M."/>
            <person name="Kishi F."/>
            <person name="Ouchi K."/>
            <person name="Shiba T."/>
            <person name="Ishii K."/>
            <person name="Hattori M."/>
            <person name="Kuhara S."/>
            <person name="Nakazawa T."/>
        </authorList>
    </citation>
    <scope>NUCLEOTIDE SEQUENCE [LARGE SCALE GENOMIC DNA]</scope>
    <source>
        <strain>J138</strain>
    </source>
</reference>
<reference key="4">
    <citation type="submission" date="2002-05" db="EMBL/GenBank/DDBJ databases">
        <title>The genome sequence of Chlamydia pneumoniae TW183 and comparison with other Chlamydia strains based on whole genome sequence analysis.</title>
        <authorList>
            <person name="Geng M.M."/>
            <person name="Schuhmacher A."/>
            <person name="Muehldorfer I."/>
            <person name="Bensch K.W."/>
            <person name="Schaefer K.P."/>
            <person name="Schneider S."/>
            <person name="Pohl T."/>
            <person name="Essig A."/>
            <person name="Marre R."/>
            <person name="Melchers K."/>
        </authorList>
    </citation>
    <scope>NUCLEOTIDE SEQUENCE [LARGE SCALE GENOMIC DNA]</scope>
    <source>
        <strain>TW-183</strain>
    </source>
</reference>
<keyword id="KW-0030">Aminoacyl-tRNA synthetase</keyword>
<keyword id="KW-0067">ATP-binding</keyword>
<keyword id="KW-0963">Cytoplasm</keyword>
<keyword id="KW-0436">Ligase</keyword>
<keyword id="KW-0460">Magnesium</keyword>
<keyword id="KW-0479">Metal-binding</keyword>
<keyword id="KW-0547">Nucleotide-binding</keyword>
<keyword id="KW-0648">Protein biosynthesis</keyword>
<keyword id="KW-0694">RNA-binding</keyword>
<keyword id="KW-0820">tRNA-binding</keyword>
<gene>
    <name type="primary">pheT</name>
    <name type="ordered locus">CPn_0594</name>
    <name type="ordered locus">CP_0154</name>
    <name type="ordered locus">CpB0618</name>
</gene>
<comment type="catalytic activity">
    <reaction>
        <text>tRNA(Phe) + L-phenylalanine + ATP = L-phenylalanyl-tRNA(Phe) + AMP + diphosphate + H(+)</text>
        <dbReference type="Rhea" id="RHEA:19413"/>
        <dbReference type="Rhea" id="RHEA-COMP:9668"/>
        <dbReference type="Rhea" id="RHEA-COMP:9699"/>
        <dbReference type="ChEBI" id="CHEBI:15378"/>
        <dbReference type="ChEBI" id="CHEBI:30616"/>
        <dbReference type="ChEBI" id="CHEBI:33019"/>
        <dbReference type="ChEBI" id="CHEBI:58095"/>
        <dbReference type="ChEBI" id="CHEBI:78442"/>
        <dbReference type="ChEBI" id="CHEBI:78531"/>
        <dbReference type="ChEBI" id="CHEBI:456215"/>
        <dbReference type="EC" id="6.1.1.20"/>
    </reaction>
</comment>
<comment type="cofactor">
    <cofactor evidence="1">
        <name>Mg(2+)</name>
        <dbReference type="ChEBI" id="CHEBI:18420"/>
    </cofactor>
    <text evidence="1">Binds 2 magnesium ions per tetramer.</text>
</comment>
<comment type="subunit">
    <text evidence="1">Tetramer of two alpha and two beta subunits.</text>
</comment>
<comment type="subcellular location">
    <subcellularLocation>
        <location evidence="1">Cytoplasm</location>
    </subcellularLocation>
</comment>
<comment type="similarity">
    <text evidence="2">Belongs to the phenylalanyl-tRNA synthetase beta subunit family. Type 1 subfamily.</text>
</comment>
<accession>Q9Z7W0</accession>
<accession>Q9JSD3</accession>
<accession>Q9K2D4</accession>
<name>SYFB_CHLPN</name>
<protein>
    <recommendedName>
        <fullName>Phenylalanine--tRNA ligase beta subunit</fullName>
        <ecNumber>6.1.1.20</ecNumber>
    </recommendedName>
    <alternativeName>
        <fullName>Phenylalanyl-tRNA synthetase beta subunit</fullName>
        <shortName>PheRS</shortName>
    </alternativeName>
</protein>